<gene>
    <name evidence="1" type="primary">dusp1-b</name>
</gene>
<accession>Q90W58</accession>
<name>DUS1B_XENLA</name>
<comment type="function">
    <text evidence="1">Dual specificity phosphatase that dephosphorylates MAP kinase MAPK1/ERK2 on both 'Thr-188' and 'Tyr-190', regulating its activity during the meiotic cell cycle.</text>
</comment>
<comment type="catalytic activity">
    <reaction evidence="1">
        <text>O-phospho-L-seryl-[protein] + H2O = L-seryl-[protein] + phosphate</text>
        <dbReference type="Rhea" id="RHEA:20629"/>
        <dbReference type="Rhea" id="RHEA-COMP:9863"/>
        <dbReference type="Rhea" id="RHEA-COMP:11604"/>
        <dbReference type="ChEBI" id="CHEBI:15377"/>
        <dbReference type="ChEBI" id="CHEBI:29999"/>
        <dbReference type="ChEBI" id="CHEBI:43474"/>
        <dbReference type="ChEBI" id="CHEBI:83421"/>
        <dbReference type="EC" id="3.1.3.16"/>
    </reaction>
</comment>
<comment type="catalytic activity">
    <reaction evidence="1">
        <text>O-phospho-L-threonyl-[protein] + H2O = L-threonyl-[protein] + phosphate</text>
        <dbReference type="Rhea" id="RHEA:47004"/>
        <dbReference type="Rhea" id="RHEA-COMP:11060"/>
        <dbReference type="Rhea" id="RHEA-COMP:11605"/>
        <dbReference type="ChEBI" id="CHEBI:15377"/>
        <dbReference type="ChEBI" id="CHEBI:30013"/>
        <dbReference type="ChEBI" id="CHEBI:43474"/>
        <dbReference type="ChEBI" id="CHEBI:61977"/>
        <dbReference type="EC" id="3.1.3.16"/>
    </reaction>
</comment>
<comment type="catalytic activity">
    <reaction evidence="1 5">
        <text>O-phospho-L-tyrosyl-[protein] + H2O = L-tyrosyl-[protein] + phosphate</text>
        <dbReference type="Rhea" id="RHEA:10684"/>
        <dbReference type="Rhea" id="RHEA-COMP:10136"/>
        <dbReference type="Rhea" id="RHEA-COMP:20101"/>
        <dbReference type="ChEBI" id="CHEBI:15377"/>
        <dbReference type="ChEBI" id="CHEBI:43474"/>
        <dbReference type="ChEBI" id="CHEBI:46858"/>
        <dbReference type="ChEBI" id="CHEBI:61978"/>
        <dbReference type="EC" id="3.1.3.48"/>
    </reaction>
</comment>
<comment type="subcellular location">
    <subcellularLocation>
        <location evidence="1">Nucleus</location>
    </subcellularLocation>
</comment>
<comment type="PTM">
    <text evidence="1">Phosphorylated by MAPK1/ERK2 at Thr-168 and at one or more serine residues in a progesterone-dependent manner. Phosphorylation reduces its rate of degradation but does not seem to affect phosphatase activity (By similarity).</text>
</comment>
<comment type="similarity">
    <text evidence="2">Belongs to the protein-tyrosine phosphatase family. Non-receptor class dual specificity subfamily.</text>
</comment>
<feature type="chain" id="PRO_0000421474" description="Dual specificity protein phosphatase 1-B">
    <location>
        <begin position="1"/>
        <end position="369"/>
    </location>
</feature>
<feature type="domain" description="Rhodanese" evidence="4">
    <location>
        <begin position="21"/>
        <end position="138"/>
    </location>
</feature>
<feature type="domain" description="Tyrosine-protein phosphatase" evidence="3">
    <location>
        <begin position="175"/>
        <end position="316"/>
    </location>
</feature>
<feature type="active site" description="Phosphocysteine intermediate" evidence="3">
    <location>
        <position position="260"/>
    </location>
</feature>
<feature type="modified residue" description="Phosphothreonine; by MAPK1" evidence="1">
    <location>
        <position position="168"/>
    </location>
</feature>
<keyword id="KW-0378">Hydrolase</keyword>
<keyword id="KW-0469">Meiosis</keyword>
<keyword id="KW-0539">Nucleus</keyword>
<keyword id="KW-0597">Phosphoprotein</keyword>
<keyword id="KW-0904">Protein phosphatase</keyword>
<keyword id="KW-1185">Reference proteome</keyword>
<evidence type="ECO:0000250" key="1">
    <source>
        <dbReference type="UniProtKB" id="Q91790"/>
    </source>
</evidence>
<evidence type="ECO:0000255" key="2"/>
<evidence type="ECO:0000255" key="3">
    <source>
        <dbReference type="PROSITE-ProRule" id="PRU00160"/>
    </source>
</evidence>
<evidence type="ECO:0000255" key="4">
    <source>
        <dbReference type="PROSITE-ProRule" id="PRU00173"/>
    </source>
</evidence>
<evidence type="ECO:0000255" key="5">
    <source>
        <dbReference type="PROSITE-ProRule" id="PRU10044"/>
    </source>
</evidence>
<evidence type="ECO:0000303" key="6">
    <source>
    </source>
</evidence>
<evidence type="ECO:0000305" key="7"/>
<evidence type="ECO:0000312" key="8">
    <source>
        <dbReference type="EMBL" id="CAC44127.1"/>
    </source>
</evidence>
<reference evidence="8" key="1">
    <citation type="journal article" date="2002" name="Mol. Biol. Cell">
        <title>Activation of p42 mitogen-activated protein kinase (MAPK), but not c-Jun NH(2)-terminal kinase, induces phosphorylation and stabilization of MAPK phosphatase XCL100 in Xenopus oocytes.</title>
        <authorList>
            <person name="Sohaskey M.L."/>
            <person name="Ferrell J.E. Jr."/>
        </authorList>
    </citation>
    <scope>NUCLEOTIDE SEQUENCE [MRNA]</scope>
    <source>
        <tissue evidence="8">Ovary</tissue>
    </source>
</reference>
<dbReference type="EC" id="3.1.3.16" evidence="1"/>
<dbReference type="EC" id="3.1.3.48" evidence="1"/>
<dbReference type="EMBL" id="AJ320159">
    <property type="protein sequence ID" value="CAC44127.1"/>
    <property type="molecule type" value="mRNA"/>
</dbReference>
<dbReference type="RefSeq" id="NP_001082153.1">
    <property type="nucleotide sequence ID" value="NM_001088684.1"/>
</dbReference>
<dbReference type="SMR" id="Q90W58"/>
<dbReference type="DNASU" id="398254"/>
<dbReference type="AGR" id="Xenbase:XB-GENE-17344125"/>
<dbReference type="Xenbase" id="XB-GENE-17344125">
    <property type="gene designation" value="dusp1.S"/>
</dbReference>
<dbReference type="OMA" id="MVMMEIS"/>
<dbReference type="OrthoDB" id="165342at2759"/>
<dbReference type="Proteomes" id="UP000186698">
    <property type="component" value="Unplaced"/>
</dbReference>
<dbReference type="Bgee" id="398254">
    <property type="expression patterns" value="Expressed in lung and 19 other cell types or tissues"/>
</dbReference>
<dbReference type="GO" id="GO:0005737">
    <property type="term" value="C:cytoplasm"/>
    <property type="evidence" value="ECO:0000250"/>
    <property type="project" value="UniProtKB"/>
</dbReference>
<dbReference type="GO" id="GO:0005634">
    <property type="term" value="C:nucleus"/>
    <property type="evidence" value="ECO:0000250"/>
    <property type="project" value="UniProtKB"/>
</dbReference>
<dbReference type="GO" id="GO:0017017">
    <property type="term" value="F:MAP kinase tyrosine/serine/threonine phosphatase activity"/>
    <property type="evidence" value="ECO:0000250"/>
    <property type="project" value="UniProtKB"/>
</dbReference>
<dbReference type="GO" id="GO:0004721">
    <property type="term" value="F:phosphoprotein phosphatase activity"/>
    <property type="evidence" value="ECO:0000318"/>
    <property type="project" value="GO_Central"/>
</dbReference>
<dbReference type="GO" id="GO:0004722">
    <property type="term" value="F:protein serine/threonine phosphatase activity"/>
    <property type="evidence" value="ECO:0000250"/>
    <property type="project" value="UniProtKB"/>
</dbReference>
<dbReference type="GO" id="GO:0004725">
    <property type="term" value="F:protein tyrosine phosphatase activity"/>
    <property type="evidence" value="ECO:0000250"/>
    <property type="project" value="UniProtKB"/>
</dbReference>
<dbReference type="GO" id="GO:0001706">
    <property type="term" value="P:endoderm formation"/>
    <property type="evidence" value="ECO:0000318"/>
    <property type="project" value="GO_Central"/>
</dbReference>
<dbReference type="GO" id="GO:0051321">
    <property type="term" value="P:meiotic cell cycle"/>
    <property type="evidence" value="ECO:0007669"/>
    <property type="project" value="UniProtKB-KW"/>
</dbReference>
<dbReference type="GO" id="GO:0043409">
    <property type="term" value="P:negative regulation of MAPK cascade"/>
    <property type="evidence" value="ECO:0000250"/>
    <property type="project" value="UniProtKB"/>
</dbReference>
<dbReference type="GO" id="GO:0051447">
    <property type="term" value="P:negative regulation of meiotic cell cycle"/>
    <property type="evidence" value="ECO:0000250"/>
    <property type="project" value="UniProtKB"/>
</dbReference>
<dbReference type="GO" id="GO:1903753">
    <property type="term" value="P:negative regulation of p38MAPK cascade"/>
    <property type="evidence" value="ECO:0000318"/>
    <property type="project" value="GO_Central"/>
</dbReference>
<dbReference type="GO" id="GO:0070262">
    <property type="term" value="P:peptidyl-serine dephosphorylation"/>
    <property type="evidence" value="ECO:0000250"/>
    <property type="project" value="UniProtKB"/>
</dbReference>
<dbReference type="GO" id="GO:0035970">
    <property type="term" value="P:peptidyl-threonine dephosphorylation"/>
    <property type="evidence" value="ECO:0000250"/>
    <property type="project" value="UniProtKB"/>
</dbReference>
<dbReference type="GO" id="GO:0035335">
    <property type="term" value="P:peptidyl-tyrosine dephosphorylation"/>
    <property type="evidence" value="ECO:0000250"/>
    <property type="project" value="UniProtKB"/>
</dbReference>
<dbReference type="GO" id="GO:0090266">
    <property type="term" value="P:regulation of mitotic cell cycle spindle assembly checkpoint"/>
    <property type="evidence" value="ECO:0000250"/>
    <property type="project" value="UniProtKB"/>
</dbReference>
<dbReference type="GO" id="GO:0007165">
    <property type="term" value="P:signal transduction"/>
    <property type="evidence" value="ECO:0000318"/>
    <property type="project" value="GO_Central"/>
</dbReference>
<dbReference type="CDD" id="cd14638">
    <property type="entry name" value="DSP_DUSP1"/>
    <property type="match status" value="1"/>
</dbReference>
<dbReference type="CDD" id="cd01446">
    <property type="entry name" value="DSP_MapKP"/>
    <property type="match status" value="1"/>
</dbReference>
<dbReference type="FunFam" id="3.90.190.10:FF:000015">
    <property type="entry name" value="Dual specificity phosphatase 4"/>
    <property type="match status" value="1"/>
</dbReference>
<dbReference type="FunFam" id="3.40.250.10:FF:000026">
    <property type="entry name" value="Dual specificity protein phosphatase"/>
    <property type="match status" value="1"/>
</dbReference>
<dbReference type="Gene3D" id="3.90.190.10">
    <property type="entry name" value="Protein tyrosine phosphatase superfamily"/>
    <property type="match status" value="1"/>
</dbReference>
<dbReference type="Gene3D" id="3.40.250.10">
    <property type="entry name" value="Rhodanese-like domain"/>
    <property type="match status" value="1"/>
</dbReference>
<dbReference type="InterPro" id="IPR000340">
    <property type="entry name" value="Dual-sp_phosphatase_cat-dom"/>
</dbReference>
<dbReference type="InterPro" id="IPR008343">
    <property type="entry name" value="MKP"/>
</dbReference>
<dbReference type="InterPro" id="IPR029021">
    <property type="entry name" value="Prot-tyrosine_phosphatase-like"/>
</dbReference>
<dbReference type="InterPro" id="IPR001763">
    <property type="entry name" value="Rhodanese-like_dom"/>
</dbReference>
<dbReference type="InterPro" id="IPR036873">
    <property type="entry name" value="Rhodanese-like_dom_sf"/>
</dbReference>
<dbReference type="InterPro" id="IPR016130">
    <property type="entry name" value="Tyr_Pase_AS"/>
</dbReference>
<dbReference type="InterPro" id="IPR003595">
    <property type="entry name" value="Tyr_Pase_cat"/>
</dbReference>
<dbReference type="InterPro" id="IPR000387">
    <property type="entry name" value="Tyr_Pase_dom"/>
</dbReference>
<dbReference type="InterPro" id="IPR020422">
    <property type="entry name" value="TYR_PHOSPHATASE_DUAL_dom"/>
</dbReference>
<dbReference type="PANTHER" id="PTHR10159">
    <property type="entry name" value="DUAL SPECIFICITY PROTEIN PHOSPHATASE"/>
    <property type="match status" value="1"/>
</dbReference>
<dbReference type="PANTHER" id="PTHR10159:SF309">
    <property type="entry name" value="DUAL SPECIFICITY PROTEIN PHOSPHATASE 1"/>
    <property type="match status" value="1"/>
</dbReference>
<dbReference type="Pfam" id="PF00782">
    <property type="entry name" value="DSPc"/>
    <property type="match status" value="1"/>
</dbReference>
<dbReference type="PIRSF" id="PIRSF000939">
    <property type="entry name" value="MAPK_Ptase"/>
    <property type="match status" value="1"/>
</dbReference>
<dbReference type="PRINTS" id="PR01908">
    <property type="entry name" value="ADSPHPHTASE"/>
</dbReference>
<dbReference type="PRINTS" id="PR01764">
    <property type="entry name" value="MAPKPHPHTASE"/>
</dbReference>
<dbReference type="SMART" id="SM00195">
    <property type="entry name" value="DSPc"/>
    <property type="match status" value="1"/>
</dbReference>
<dbReference type="SMART" id="SM00404">
    <property type="entry name" value="PTPc_motif"/>
    <property type="match status" value="1"/>
</dbReference>
<dbReference type="SMART" id="SM00450">
    <property type="entry name" value="RHOD"/>
    <property type="match status" value="1"/>
</dbReference>
<dbReference type="SUPFAM" id="SSF52799">
    <property type="entry name" value="(Phosphotyrosine protein) phosphatases II"/>
    <property type="match status" value="1"/>
</dbReference>
<dbReference type="SUPFAM" id="SSF52821">
    <property type="entry name" value="Rhodanese/Cell cycle control phosphatase"/>
    <property type="match status" value="1"/>
</dbReference>
<dbReference type="PROSITE" id="PS50206">
    <property type="entry name" value="RHODANESE_3"/>
    <property type="match status" value="1"/>
</dbReference>
<dbReference type="PROSITE" id="PS00383">
    <property type="entry name" value="TYR_PHOSPHATASE_1"/>
    <property type="match status" value="1"/>
</dbReference>
<dbReference type="PROSITE" id="PS50056">
    <property type="entry name" value="TYR_PHOSPHATASE_2"/>
    <property type="match status" value="1"/>
</dbReference>
<dbReference type="PROSITE" id="PS50054">
    <property type="entry name" value="TYR_PHOSPHATASE_DUAL"/>
    <property type="match status" value="1"/>
</dbReference>
<sequence length="369" mass="40363">MVNMEICAMDCCVFKGLLAERAHKCLILDCRSFFAFSSSSIIGSSNVRLSTIVKRRAKGSMGLEHIIPNEEQRGRLVAGMYEAVVLLDERTSELDMLRKDSTMMLAVNALSRDPRGSRIYFLKGGYETFSSQCPEFCNKNSPPVALSLPLSPNNVPGSADSNCTPCGTPLYDQGGPVEILPFLYLGSAYHASRKDMLEALGITALINVSANCPNHFEGHFQYKSIPVEDSHKADISSWFNEAIDFIDSIKTCGGRVFVHCQAGISRSATICLAYLMRTNRVKLDEAFEFVKQRRSIISPNFSFMGQLLQFESQVLAPSCSAEAGSPTISVLDRGTSTTTVFNFPVSIPVHSGANSLSYLQNPITTSPSC</sequence>
<proteinExistence type="evidence at transcript level"/>
<protein>
    <recommendedName>
        <fullName evidence="7">Dual specificity protein phosphatase 1-B</fullName>
        <ecNumber evidence="1">3.1.3.16</ecNumber>
        <ecNumber evidence="1">3.1.3.48</ecNumber>
    </recommendedName>
    <alternativeName>
        <fullName evidence="6">XCL100-beta</fullName>
    </alternativeName>
</protein>
<organism>
    <name type="scientific">Xenopus laevis</name>
    <name type="common">African clawed frog</name>
    <dbReference type="NCBI Taxonomy" id="8355"/>
    <lineage>
        <taxon>Eukaryota</taxon>
        <taxon>Metazoa</taxon>
        <taxon>Chordata</taxon>
        <taxon>Craniata</taxon>
        <taxon>Vertebrata</taxon>
        <taxon>Euteleostomi</taxon>
        <taxon>Amphibia</taxon>
        <taxon>Batrachia</taxon>
        <taxon>Anura</taxon>
        <taxon>Pipoidea</taxon>
        <taxon>Pipidae</taxon>
        <taxon>Xenopodinae</taxon>
        <taxon>Xenopus</taxon>
        <taxon>Xenopus</taxon>
    </lineage>
</organism>